<accession>Q8GUP1</accession>
<accession>Q8LKG5</accession>
<accession>Q9FZ58</accession>
<name>CTF77_ARATH</name>
<feature type="chain" id="PRO_0000431324" description="Cleavage stimulation factor subunit 77">
    <location>
        <begin position="1"/>
        <end position="734"/>
    </location>
</feature>
<feature type="repeat" description="HAT 1" evidence="2">
    <location>
        <begin position="20"/>
        <end position="52"/>
    </location>
</feature>
<feature type="repeat" description="HAT 2" evidence="2">
    <location>
        <begin position="54"/>
        <end position="85"/>
    </location>
</feature>
<feature type="repeat" description="HAT 3" evidence="2">
    <location>
        <begin position="93"/>
        <end position="128"/>
    </location>
</feature>
<feature type="repeat" description="HAT 4" evidence="2">
    <location>
        <begin position="139"/>
        <end position="172"/>
    </location>
</feature>
<feature type="repeat" description="HAT 5" evidence="2">
    <location>
        <begin position="198"/>
        <end position="237"/>
    </location>
</feature>
<feature type="repeat" description="HAT 6" evidence="2">
    <location>
        <begin position="246"/>
        <end position="278"/>
    </location>
</feature>
<feature type="repeat" description="HAT 7" evidence="2">
    <location>
        <begin position="280"/>
        <end position="312"/>
    </location>
</feature>
<feature type="repeat" description="HAT 8" evidence="2">
    <location>
        <begin position="314"/>
        <end position="345"/>
    </location>
</feature>
<feature type="repeat" description="HAT 9" evidence="2">
    <location>
        <begin position="347"/>
        <end position="379"/>
    </location>
</feature>
<feature type="repeat" description="HAT 10" evidence="2">
    <location>
        <begin position="382"/>
        <end position="414"/>
    </location>
</feature>
<feature type="repeat" description="HAT 11" evidence="2">
    <location>
        <begin position="416"/>
        <end position="450"/>
    </location>
</feature>
<feature type="repeat" description="HAT 12" evidence="2">
    <location>
        <begin position="474"/>
        <end position="505"/>
    </location>
</feature>
<feature type="region of interest" description="Disordered" evidence="3">
    <location>
        <begin position="637"/>
        <end position="734"/>
    </location>
</feature>
<feature type="compositionally biased region" description="Basic and acidic residues" evidence="3">
    <location>
        <begin position="664"/>
        <end position="677"/>
    </location>
</feature>
<feature type="compositionally biased region" description="Polar residues" evidence="3">
    <location>
        <begin position="709"/>
        <end position="734"/>
    </location>
</feature>
<feature type="sequence conflict" description="In Ref. 1; AAM64166." ref="1">
    <original>N</original>
    <variation>S</variation>
    <location>
        <position position="573"/>
    </location>
</feature>
<evidence type="ECO:0000250" key="1">
    <source>
        <dbReference type="UniProtKB" id="Q12996"/>
    </source>
</evidence>
<evidence type="ECO:0000255" key="2"/>
<evidence type="ECO:0000256" key="3">
    <source>
        <dbReference type="SAM" id="MobiDB-lite"/>
    </source>
</evidence>
<evidence type="ECO:0000269" key="4">
    <source>
    </source>
</evidence>
<evidence type="ECO:0000269" key="5">
    <source>
    </source>
</evidence>
<evidence type="ECO:0000269" key="6">
    <source>
    </source>
</evidence>
<evidence type="ECO:0000269" key="7">
    <source>
    </source>
</evidence>
<evidence type="ECO:0000269" key="8">
    <source>
    </source>
</evidence>
<evidence type="ECO:0000269" key="9">
    <source>
    </source>
</evidence>
<evidence type="ECO:0000303" key="10">
    <source>
    </source>
</evidence>
<evidence type="ECO:0000303" key="11">
    <source>
    </source>
</evidence>
<evidence type="ECO:0000303" key="12">
    <source>
    </source>
</evidence>
<evidence type="ECO:0000305" key="13"/>
<evidence type="ECO:0000312" key="14">
    <source>
        <dbReference type="Araport" id="AT1G17760"/>
    </source>
</evidence>
<evidence type="ECO:0000312" key="15">
    <source>
        <dbReference type="EMBL" id="AAF99818.1"/>
    </source>
</evidence>
<evidence type="ECO:0000312" key="16">
    <source>
        <dbReference type="EMBL" id="AAN86153.1"/>
    </source>
</evidence>
<protein>
    <recommendedName>
        <fullName evidence="10">Cleavage stimulation factor subunit 77</fullName>
        <shortName evidence="10">AtCstF-77</shortName>
        <shortName evidence="11">AtCstF77</shortName>
    </recommendedName>
    <alternativeName>
        <fullName evidence="13">CF-1 77 kDa subunit</fullName>
    </alternativeName>
    <alternativeName>
        <fullName evidence="13">Cleavage stimulation factor 77 kDa subunit</fullName>
        <shortName evidence="13">CSTF 77 kDa subunit</shortName>
    </alternativeName>
    <alternativeName>
        <fullName evidence="12">Protein SUPPRESSORS OF OVEREXPRESSED FCA 2</fullName>
        <shortName evidence="12">SOF2</shortName>
    </alternativeName>
</protein>
<keyword id="KW-0507">mRNA processing</keyword>
<keyword id="KW-0539">Nucleus</keyword>
<keyword id="KW-1185">Reference proteome</keyword>
<keyword id="KW-0677">Repeat</keyword>
<keyword id="KW-0943">RNA-mediated gene silencing</keyword>
<comment type="function">
    <text evidence="1 8">One of the multiple factors required for polyadenylation and 3'-end cleavage of pre-mRNAs (By similarity). Required for the targeted 3' processing of antisense transcripts that triggers transcriptional silencing of the corresponding sense gene (PubMed:19965720).</text>
</comment>
<comment type="subunit">
    <text evidence="1 4 5 6 7 9">Homodimer. Belongs to the CSTF complex (By similarity). Forms a complex with cleavage and polyadenylation specificity factor (CPSF) subunits CPSF30, CSTF64, PCFS1, PCFS5 and FIPS5 (PubMed:12379796, PubMed:16282318, PubMed:18221017, PubMed:18479511, PubMed:20214900).</text>
</comment>
<comment type="interaction">
    <interactant intactId="EBI-1775543">
        <id>Q8GUP1</id>
    </interactant>
    <interactant intactId="EBI-962511">
        <id>A9LNK9</id>
        <label>CPSF30</label>
    </interactant>
    <organismsDiffer>false</organismsDiffer>
    <experiments>2</experiments>
</comment>
<comment type="interaction">
    <interactant intactId="EBI-1775543">
        <id>Q8GUP1</id>
    </interactant>
    <interactant intactId="EBI-1775671">
        <id>Q9M9G6</id>
        <label>CSTF64</label>
    </interactant>
    <organismsDiffer>false</organismsDiffer>
    <experiments>3</experiments>
</comment>
<comment type="subcellular location">
    <subcellularLocation>
        <location evidence="1">Nucleus</location>
    </subcellularLocation>
</comment>
<comment type="disruption phenotype">
    <text evidence="8">Impaired antisense-RNA-mediated gene silencing (e.g. suppression of overexpression of FCA-mediated FLC repression). Delayed flowering and female gametophytic lethality.</text>
</comment>
<comment type="sequence caution" evidence="13">
    <conflict type="erroneous gene model prediction">
        <sequence resource="EMBL-CDS" id="AAF99818"/>
    </conflict>
</comment>
<reference key="1">
    <citation type="journal article" date="2002" name="J. Exp. Bot.">
        <title>Cloning and characterization of Arabidopsis homologues of the animal CstF complex that regulates 3' mRNA cleavage and polyadenylation.</title>
        <authorList>
            <person name="Yao Y."/>
            <person name="Song L."/>
            <person name="Katz Y."/>
            <person name="Galili G."/>
        </authorList>
    </citation>
    <scope>NUCLEOTIDE SEQUENCE [MRNA]</scope>
    <scope>INTERACTION WITH CSTF64</scope>
    <source>
        <strain>cv. Columbia</strain>
    </source>
</reference>
<reference key="2">
    <citation type="journal article" date="2000" name="Nature">
        <title>Sequence and analysis of chromosome 1 of the plant Arabidopsis thaliana.</title>
        <authorList>
            <person name="Theologis A."/>
            <person name="Ecker J.R."/>
            <person name="Palm C.J."/>
            <person name="Federspiel N.A."/>
            <person name="Kaul S."/>
            <person name="White O."/>
            <person name="Alonso J."/>
            <person name="Altafi H."/>
            <person name="Araujo R."/>
            <person name="Bowman C.L."/>
            <person name="Brooks S.Y."/>
            <person name="Buehler E."/>
            <person name="Chan A."/>
            <person name="Chao Q."/>
            <person name="Chen H."/>
            <person name="Cheuk R.F."/>
            <person name="Chin C.W."/>
            <person name="Chung M.K."/>
            <person name="Conn L."/>
            <person name="Conway A.B."/>
            <person name="Conway A.R."/>
            <person name="Creasy T.H."/>
            <person name="Dewar K."/>
            <person name="Dunn P."/>
            <person name="Etgu P."/>
            <person name="Feldblyum T.V."/>
            <person name="Feng J.-D."/>
            <person name="Fong B."/>
            <person name="Fujii C.Y."/>
            <person name="Gill J.E."/>
            <person name="Goldsmith A.D."/>
            <person name="Haas B."/>
            <person name="Hansen N.F."/>
            <person name="Hughes B."/>
            <person name="Huizar L."/>
            <person name="Hunter J.L."/>
            <person name="Jenkins J."/>
            <person name="Johnson-Hopson C."/>
            <person name="Khan S."/>
            <person name="Khaykin E."/>
            <person name="Kim C.J."/>
            <person name="Koo H.L."/>
            <person name="Kremenetskaia I."/>
            <person name="Kurtz D.B."/>
            <person name="Kwan A."/>
            <person name="Lam B."/>
            <person name="Langin-Hooper S."/>
            <person name="Lee A."/>
            <person name="Lee J.M."/>
            <person name="Lenz C.A."/>
            <person name="Li J.H."/>
            <person name="Li Y.-P."/>
            <person name="Lin X."/>
            <person name="Liu S.X."/>
            <person name="Liu Z.A."/>
            <person name="Luros J.S."/>
            <person name="Maiti R."/>
            <person name="Marziali A."/>
            <person name="Militscher J."/>
            <person name="Miranda M."/>
            <person name="Nguyen M."/>
            <person name="Nierman W.C."/>
            <person name="Osborne B.I."/>
            <person name="Pai G."/>
            <person name="Peterson J."/>
            <person name="Pham P.K."/>
            <person name="Rizzo M."/>
            <person name="Rooney T."/>
            <person name="Rowley D."/>
            <person name="Sakano H."/>
            <person name="Salzberg S.L."/>
            <person name="Schwartz J.R."/>
            <person name="Shinn P."/>
            <person name="Southwick A.M."/>
            <person name="Sun H."/>
            <person name="Tallon L.J."/>
            <person name="Tambunga G."/>
            <person name="Toriumi M.J."/>
            <person name="Town C.D."/>
            <person name="Utterback T."/>
            <person name="Van Aken S."/>
            <person name="Vaysberg M."/>
            <person name="Vysotskaia V.S."/>
            <person name="Walker M."/>
            <person name="Wu D."/>
            <person name="Yu G."/>
            <person name="Fraser C.M."/>
            <person name="Venter J.C."/>
            <person name="Davis R.W."/>
        </authorList>
    </citation>
    <scope>NUCLEOTIDE SEQUENCE [LARGE SCALE GENOMIC DNA]</scope>
    <source>
        <strain>cv. Columbia</strain>
    </source>
</reference>
<reference key="3">
    <citation type="journal article" date="2017" name="Plant J.">
        <title>Araport11: a complete reannotation of the Arabidopsis thaliana reference genome.</title>
        <authorList>
            <person name="Cheng C.Y."/>
            <person name="Krishnakumar V."/>
            <person name="Chan A.P."/>
            <person name="Thibaud-Nissen F."/>
            <person name="Schobel S."/>
            <person name="Town C.D."/>
        </authorList>
    </citation>
    <scope>GENOME REANNOTATION</scope>
    <source>
        <strain>cv. Columbia</strain>
    </source>
</reference>
<reference key="4">
    <citation type="journal article" date="2003" name="Science">
        <title>Empirical analysis of transcriptional activity in the Arabidopsis genome.</title>
        <authorList>
            <person name="Yamada K."/>
            <person name="Lim J."/>
            <person name="Dale J.M."/>
            <person name="Chen H."/>
            <person name="Shinn P."/>
            <person name="Palm C.J."/>
            <person name="Southwick A.M."/>
            <person name="Wu H.C."/>
            <person name="Kim C.J."/>
            <person name="Nguyen M."/>
            <person name="Pham P.K."/>
            <person name="Cheuk R.F."/>
            <person name="Karlin-Newmann G."/>
            <person name="Liu S.X."/>
            <person name="Lam B."/>
            <person name="Sakano H."/>
            <person name="Wu T."/>
            <person name="Yu G."/>
            <person name="Miranda M."/>
            <person name="Quach H.L."/>
            <person name="Tripp M."/>
            <person name="Chang C.H."/>
            <person name="Lee J.M."/>
            <person name="Toriumi M.J."/>
            <person name="Chan M.M."/>
            <person name="Tang C.C."/>
            <person name="Onodera C.S."/>
            <person name="Deng J.M."/>
            <person name="Akiyama K."/>
            <person name="Ansari Y."/>
            <person name="Arakawa T."/>
            <person name="Banh J."/>
            <person name="Banno F."/>
            <person name="Bowser L."/>
            <person name="Brooks S.Y."/>
            <person name="Carninci P."/>
            <person name="Chao Q."/>
            <person name="Choy N."/>
            <person name="Enju A."/>
            <person name="Goldsmith A.D."/>
            <person name="Gurjal M."/>
            <person name="Hansen N.F."/>
            <person name="Hayashizaki Y."/>
            <person name="Johnson-Hopson C."/>
            <person name="Hsuan V.W."/>
            <person name="Iida K."/>
            <person name="Karnes M."/>
            <person name="Khan S."/>
            <person name="Koesema E."/>
            <person name="Ishida J."/>
            <person name="Jiang P.X."/>
            <person name="Jones T."/>
            <person name="Kawai J."/>
            <person name="Kamiya A."/>
            <person name="Meyers C."/>
            <person name="Nakajima M."/>
            <person name="Narusaka M."/>
            <person name="Seki M."/>
            <person name="Sakurai T."/>
            <person name="Satou M."/>
            <person name="Tamse R."/>
            <person name="Vaysberg M."/>
            <person name="Wallender E.K."/>
            <person name="Wong C."/>
            <person name="Yamamura Y."/>
            <person name="Yuan S."/>
            <person name="Shinozaki K."/>
            <person name="Davis R.W."/>
            <person name="Theologis A."/>
            <person name="Ecker J.R."/>
        </authorList>
    </citation>
    <scope>NUCLEOTIDE SEQUENCE [LARGE SCALE MRNA]</scope>
    <source>
        <strain>cv. Columbia</strain>
    </source>
</reference>
<reference key="5">
    <citation type="journal article" date="2006" name="J. Biol. Chem.">
        <title>An Arabidopsis Fip1 homolog interacts with RNA and provides conceptual links with a number of other polyadenylation factor subunits.</title>
        <authorList>
            <person name="Forbes K.P."/>
            <person name="Addepalli B."/>
            <person name="Hunt A.G."/>
        </authorList>
    </citation>
    <scope>GENE FAMILY</scope>
    <scope>INTERACTION WITH FIPS5</scope>
</reference>
<reference key="6">
    <citation type="journal article" date="2008" name="BMC Genomics">
        <title>Arabidopsis mRNA polyadenylation machinery: comprehensive analysis of protein-protein interactions and gene expression profiling.</title>
        <authorList>
            <person name="Hunt A.G."/>
            <person name="Xu R."/>
            <person name="Addepalli B."/>
            <person name="Rao S."/>
            <person name="Forbes K.P."/>
            <person name="Meeks L.R."/>
            <person name="Xing D."/>
            <person name="Mo M."/>
            <person name="Zhao H."/>
            <person name="Bandyopadhyay A."/>
            <person name="Dampanaboina L."/>
            <person name="Marion A."/>
            <person name="Von Lanken C."/>
            <person name="Li Q.Q."/>
        </authorList>
    </citation>
    <scope>INTERACTION WITH CSTF64; CPSF30; FIPS5; PCFS1 AND PCFS5</scope>
    <scope>GENE FAMILY</scope>
    <scope>NOMENCLATURE</scope>
</reference>
<reference key="7">
    <citation type="journal article" date="2008" name="Protein Pept. Lett.">
        <title>The interaction between two Arabidopsis polyadenylation factor subunits involves an evolutionarily-conserved motif and has implications for the assembly and function of the polyadenylation complex.</title>
        <authorList>
            <person name="Addepalli B."/>
            <person name="Hunt A.G."/>
        </authorList>
    </citation>
    <scope>INTERACTION WITH FIPS5 AND CSTF64</scope>
</reference>
<reference key="8">
    <citation type="journal article" date="2010" name="FEBS Lett.">
        <title>The Arabidopsis ortholog of the 77 kDa subunit of the cleavage stimulatory factor (AtCstF-77) involved in mRNA polyadenylation is an RNA-binding protein.</title>
        <authorList>
            <person name="Bell S.A."/>
            <person name="Hunt A.G."/>
        </authorList>
    </citation>
    <scope>INTERACTION WITH CPSF30</scope>
</reference>
<reference key="9">
    <citation type="journal article" date="2010" name="Science">
        <title>Targeted 3' processing of antisense transcripts triggers Arabidopsis FLC chromatin silencing.</title>
        <authorList>
            <person name="Liu F."/>
            <person name="Marquardt S."/>
            <person name="Lister C."/>
            <person name="Swiezewski S."/>
            <person name="Dean C."/>
        </authorList>
    </citation>
    <scope>FUNCTION</scope>
    <scope>DISRUPTION PHENOTYPE</scope>
</reference>
<dbReference type="EMBL" id="AF515697">
    <property type="protein sequence ID" value="AAM64166.1"/>
    <property type="molecule type" value="mRNA"/>
</dbReference>
<dbReference type="EMBL" id="AC034257">
    <property type="protein sequence ID" value="AAF99818.1"/>
    <property type="status" value="ALT_SEQ"/>
    <property type="molecule type" value="Genomic_DNA"/>
</dbReference>
<dbReference type="EMBL" id="CP002684">
    <property type="protein sequence ID" value="AEE29633.1"/>
    <property type="molecule type" value="Genomic_DNA"/>
</dbReference>
<dbReference type="EMBL" id="BT002320">
    <property type="protein sequence ID" value="AAN86153.1"/>
    <property type="molecule type" value="mRNA"/>
</dbReference>
<dbReference type="PIR" id="F86312">
    <property type="entry name" value="F86312"/>
</dbReference>
<dbReference type="RefSeq" id="NP_173218.2">
    <property type="nucleotide sequence ID" value="NM_101639.3"/>
</dbReference>
<dbReference type="SMR" id="Q8GUP1"/>
<dbReference type="BioGRID" id="23593">
    <property type="interactions" value="9"/>
</dbReference>
<dbReference type="FunCoup" id="Q8GUP1">
    <property type="interactions" value="4403"/>
</dbReference>
<dbReference type="IntAct" id="Q8GUP1">
    <property type="interactions" value="5"/>
</dbReference>
<dbReference type="MINT" id="Q8GUP1"/>
<dbReference type="STRING" id="3702.Q8GUP1"/>
<dbReference type="GlyGen" id="Q8GUP1">
    <property type="glycosylation" value="3 sites, 1 O-linked glycan (1 site)"/>
</dbReference>
<dbReference type="PaxDb" id="3702-AT1G17760.1"/>
<dbReference type="ProteomicsDB" id="222698"/>
<dbReference type="EnsemblPlants" id="AT1G17760.1">
    <property type="protein sequence ID" value="AT1G17760.1"/>
    <property type="gene ID" value="AT1G17760"/>
</dbReference>
<dbReference type="GeneID" id="838354"/>
<dbReference type="Gramene" id="AT1G17760.1">
    <property type="protein sequence ID" value="AT1G17760.1"/>
    <property type="gene ID" value="AT1G17760"/>
</dbReference>
<dbReference type="KEGG" id="ath:AT1G17760"/>
<dbReference type="Araport" id="AT1G17760"/>
<dbReference type="TAIR" id="AT1G17760">
    <property type="gene designation" value="CSTF77"/>
</dbReference>
<dbReference type="eggNOG" id="KOG1914">
    <property type="taxonomic scope" value="Eukaryota"/>
</dbReference>
<dbReference type="HOGENOM" id="CLU_007630_3_0_1"/>
<dbReference type="InParanoid" id="Q8GUP1"/>
<dbReference type="OMA" id="CFRGPFV"/>
<dbReference type="OrthoDB" id="26282at2759"/>
<dbReference type="PhylomeDB" id="Q8GUP1"/>
<dbReference type="PRO" id="PR:Q8GUP1"/>
<dbReference type="Proteomes" id="UP000006548">
    <property type="component" value="Chromosome 1"/>
</dbReference>
<dbReference type="ExpressionAtlas" id="Q8GUP1">
    <property type="expression patterns" value="baseline and differential"/>
</dbReference>
<dbReference type="GO" id="GO:0005634">
    <property type="term" value="C:nucleus"/>
    <property type="evidence" value="ECO:0007669"/>
    <property type="project" value="UniProtKB-SubCell"/>
</dbReference>
<dbReference type="GO" id="GO:0003729">
    <property type="term" value="F:mRNA binding"/>
    <property type="evidence" value="ECO:0000314"/>
    <property type="project" value="TAIR"/>
</dbReference>
<dbReference type="GO" id="GO:0042868">
    <property type="term" value="P:antisense RNA metabolic process"/>
    <property type="evidence" value="ECO:0000315"/>
    <property type="project" value="UniProtKB"/>
</dbReference>
<dbReference type="GO" id="GO:0009553">
    <property type="term" value="P:embryo sac development"/>
    <property type="evidence" value="ECO:0000315"/>
    <property type="project" value="TAIR"/>
</dbReference>
<dbReference type="GO" id="GO:0031124">
    <property type="term" value="P:mRNA 3'-end processing"/>
    <property type="evidence" value="ECO:0007669"/>
    <property type="project" value="InterPro"/>
</dbReference>
<dbReference type="GO" id="GO:0045892">
    <property type="term" value="P:negative regulation of DNA-templated transcription"/>
    <property type="evidence" value="ECO:0000315"/>
    <property type="project" value="TAIR"/>
</dbReference>
<dbReference type="GO" id="GO:0016441">
    <property type="term" value="P:post-transcriptional gene silencing"/>
    <property type="evidence" value="ECO:0000315"/>
    <property type="project" value="UniProtKB"/>
</dbReference>
<dbReference type="GO" id="GO:0031047">
    <property type="term" value="P:regulatory ncRNA-mediated gene silencing"/>
    <property type="evidence" value="ECO:0000315"/>
    <property type="project" value="UniProtKB"/>
</dbReference>
<dbReference type="GO" id="GO:0031123">
    <property type="term" value="P:RNA 3'-end processing"/>
    <property type="evidence" value="ECO:0000315"/>
    <property type="project" value="TAIR"/>
</dbReference>
<dbReference type="FunFam" id="1.25.40.1040:FF:000005">
    <property type="entry name" value="Cleavage stimulation factor subunit 77"/>
    <property type="match status" value="1"/>
</dbReference>
<dbReference type="Gene3D" id="1.25.40.1040">
    <property type="match status" value="1"/>
</dbReference>
<dbReference type="InterPro" id="IPR003107">
    <property type="entry name" value="HAT"/>
</dbReference>
<dbReference type="InterPro" id="IPR045243">
    <property type="entry name" value="Rna14-like"/>
</dbReference>
<dbReference type="InterPro" id="IPR008847">
    <property type="entry name" value="Suf"/>
</dbReference>
<dbReference type="InterPro" id="IPR011990">
    <property type="entry name" value="TPR-like_helical_dom_sf"/>
</dbReference>
<dbReference type="InterPro" id="IPR019734">
    <property type="entry name" value="TPR_rpt"/>
</dbReference>
<dbReference type="PANTHER" id="PTHR19980:SF0">
    <property type="entry name" value="CLEAVAGE STIMULATION FACTOR SUBUNIT 3"/>
    <property type="match status" value="1"/>
</dbReference>
<dbReference type="PANTHER" id="PTHR19980">
    <property type="entry name" value="RNA CLEAVAGE STIMULATION FACTOR"/>
    <property type="match status" value="1"/>
</dbReference>
<dbReference type="Pfam" id="PF05843">
    <property type="entry name" value="Suf"/>
    <property type="match status" value="1"/>
</dbReference>
<dbReference type="SMART" id="SM00386">
    <property type="entry name" value="HAT"/>
    <property type="match status" value="10"/>
</dbReference>
<dbReference type="SUPFAM" id="SSF48452">
    <property type="entry name" value="TPR-like"/>
    <property type="match status" value="1"/>
</dbReference>
<proteinExistence type="evidence at protein level"/>
<organism evidence="16">
    <name type="scientific">Arabidopsis thaliana</name>
    <name type="common">Mouse-ear cress</name>
    <dbReference type="NCBI Taxonomy" id="3702"/>
    <lineage>
        <taxon>Eukaryota</taxon>
        <taxon>Viridiplantae</taxon>
        <taxon>Streptophyta</taxon>
        <taxon>Embryophyta</taxon>
        <taxon>Tracheophyta</taxon>
        <taxon>Spermatophyta</taxon>
        <taxon>Magnoliopsida</taxon>
        <taxon>eudicotyledons</taxon>
        <taxon>Gunneridae</taxon>
        <taxon>Pentapetalae</taxon>
        <taxon>rosids</taxon>
        <taxon>malvids</taxon>
        <taxon>Brassicales</taxon>
        <taxon>Brassicaceae</taxon>
        <taxon>Camelineae</taxon>
        <taxon>Arabidopsis</taxon>
    </lineage>
</organism>
<gene>
    <name evidence="10" type="primary">CSTF77</name>
    <name evidence="14" type="ordered locus">At1g17760</name>
    <name evidence="15" type="ORF">F11A6.10</name>
</gene>
<sequence>MADKYIVEEAEALAKRALHSPIAQATPIYEQLLSLYPTSARFWKQYVEAQMAVNNDDATKQIFSRCLLTCLQVPLWQCYIRFIRKVYDKKGAEGQEETTKAFEFMLNYIGTDIASGPIWTEYIAFLKSLPALNLNEDLHRKTALRKVYHRAILTPTHHVEQLWKDYENFENTVNRQLAKGLVNEYQPKFNSARAVYRERKKYIEEIDWNMLAVPPTGTSKEETQWVAWKKFLSFEKGNPQRIDTASSTKRIIYAYEQCLMCLYHYPDVWYDYAEWHVKSGSTDAAIKVFQRALKAIPDSEMLKYAFAEMEESRGAIQSAKKLYENILGASTNSLAHIQYLRFLRRAEGVEAARKYFLDARKSPSCTYHVYIAFATMAFCIDKEPKVAHNIFEEGLKLYMSEPVYILKYADFLTRLNDDRNIRALFERALSTLPVEDSAEVWKRFIQFEQTYGDLASILKVEQRMKEALSGKGEEGSSPPESSLQDVVSRYSYMDLWPCTSNDLDHLARQELLVKNLNKKAGKTNLPHVPAAIGSVASSSKVVYPDTSQMVVQDPTKKSEFASSANPVAASASNTFPSTVTATATHGSASTFDEIPKTTPPALVAFLANLPIVDGPTPNVDVVLSICLQSDFPTGQTVKQSFAAKGNPPSQNDPSGPTRGVSQRLPRDRRATKRKDSDRQEEDDTATVQSQPLPTDVFRLRQMRKARGIATSSQTPTGSTSYGSAFSGELSGSTG</sequence>